<accession>Q48GC6</accession>
<proteinExistence type="inferred from homology"/>
<organism>
    <name type="scientific">Pseudomonas savastanoi pv. phaseolicola (strain 1448A / Race 6)</name>
    <name type="common">Pseudomonas syringae pv. phaseolicola (strain 1448A / Race 6)</name>
    <dbReference type="NCBI Taxonomy" id="264730"/>
    <lineage>
        <taxon>Bacteria</taxon>
        <taxon>Pseudomonadati</taxon>
        <taxon>Pseudomonadota</taxon>
        <taxon>Gammaproteobacteria</taxon>
        <taxon>Pseudomonadales</taxon>
        <taxon>Pseudomonadaceae</taxon>
        <taxon>Pseudomonas</taxon>
    </lineage>
</organism>
<dbReference type="EMBL" id="CP000058">
    <property type="protein sequence ID" value="AAZ35079.1"/>
    <property type="molecule type" value="Genomic_DNA"/>
</dbReference>
<dbReference type="RefSeq" id="WP_003404340.1">
    <property type="nucleotide sequence ID" value="NC_005773.3"/>
</dbReference>
<dbReference type="SMR" id="Q48GC6"/>
<dbReference type="KEGG" id="psp:PSPPH_3399"/>
<dbReference type="eggNOG" id="COG1706">
    <property type="taxonomic scope" value="Bacteria"/>
</dbReference>
<dbReference type="HOGENOM" id="CLU_045235_1_0_6"/>
<dbReference type="Proteomes" id="UP000000551">
    <property type="component" value="Chromosome"/>
</dbReference>
<dbReference type="GO" id="GO:0009428">
    <property type="term" value="C:bacterial-type flagellum basal body, distal rod, P ring"/>
    <property type="evidence" value="ECO:0007669"/>
    <property type="project" value="InterPro"/>
</dbReference>
<dbReference type="GO" id="GO:0030288">
    <property type="term" value="C:outer membrane-bounded periplasmic space"/>
    <property type="evidence" value="ECO:0007669"/>
    <property type="project" value="InterPro"/>
</dbReference>
<dbReference type="GO" id="GO:0005198">
    <property type="term" value="F:structural molecule activity"/>
    <property type="evidence" value="ECO:0007669"/>
    <property type="project" value="InterPro"/>
</dbReference>
<dbReference type="GO" id="GO:0071973">
    <property type="term" value="P:bacterial-type flagellum-dependent cell motility"/>
    <property type="evidence" value="ECO:0007669"/>
    <property type="project" value="InterPro"/>
</dbReference>
<dbReference type="HAMAP" id="MF_00416">
    <property type="entry name" value="FlgI"/>
    <property type="match status" value="1"/>
</dbReference>
<dbReference type="InterPro" id="IPR001782">
    <property type="entry name" value="Flag_FlgI"/>
</dbReference>
<dbReference type="NCBIfam" id="NF003676">
    <property type="entry name" value="PRK05303.1"/>
    <property type="match status" value="1"/>
</dbReference>
<dbReference type="PANTHER" id="PTHR30381">
    <property type="entry name" value="FLAGELLAR P-RING PERIPLASMIC PROTEIN FLGI"/>
    <property type="match status" value="1"/>
</dbReference>
<dbReference type="PANTHER" id="PTHR30381:SF0">
    <property type="entry name" value="FLAGELLAR P-RING PROTEIN"/>
    <property type="match status" value="1"/>
</dbReference>
<dbReference type="Pfam" id="PF02119">
    <property type="entry name" value="FlgI"/>
    <property type="match status" value="1"/>
</dbReference>
<dbReference type="PRINTS" id="PR01010">
    <property type="entry name" value="FLGPRINGFLGI"/>
</dbReference>
<sequence>MIKLKQLIAATLLLSTAFGVHAERLKDIASISGVRANQLIGYGLVVGLNGTGDQTTQTPFTLQTFNNMLSQFGIKVPSGSGTVQLKNVAAVAVYADLPAFAKPGQTVDITVSSIGNSKSLRGGALLMTPMKGVDGNVYAIAQGNLVVGGFDAEGRDGSKITVNVPSSGRIPGGASVERSVPSGFNQGNTLTLNLNRSDFTTAKRIVDKINELLGPGVAQALDGGSVRVTAPLDPGQRVDYLSILENLEVDPGQTAAKVIINSRTGTIVIGQNVKVSPAAVTHGSLTVTITEDPIVSQPGALSGGQTAVVPRSRVNAQQELHPMFKFGPGTTLDEIVRAVNQVGAAPGDLMAILEALKQAGALQADLIVI</sequence>
<evidence type="ECO:0000255" key="1">
    <source>
        <dbReference type="HAMAP-Rule" id="MF_00416"/>
    </source>
</evidence>
<gene>
    <name evidence="1" type="primary">flgI</name>
    <name type="ordered locus">PSPPH_3399</name>
</gene>
<feature type="signal peptide" evidence="1">
    <location>
        <begin position="1"/>
        <end position="22"/>
    </location>
</feature>
<feature type="chain" id="PRO_0000236312" description="Flagellar P-ring protein">
    <location>
        <begin position="23"/>
        <end position="369"/>
    </location>
</feature>
<reference key="1">
    <citation type="journal article" date="2005" name="J. Bacteriol.">
        <title>Whole-genome sequence analysis of Pseudomonas syringae pv. phaseolicola 1448A reveals divergence among pathovars in genes involved in virulence and transposition.</title>
        <authorList>
            <person name="Joardar V."/>
            <person name="Lindeberg M."/>
            <person name="Jackson R.W."/>
            <person name="Selengut J."/>
            <person name="Dodson R."/>
            <person name="Brinkac L.M."/>
            <person name="Daugherty S.C."/>
            <person name="DeBoy R.T."/>
            <person name="Durkin A.S."/>
            <person name="Gwinn Giglio M."/>
            <person name="Madupu R."/>
            <person name="Nelson W.C."/>
            <person name="Rosovitz M.J."/>
            <person name="Sullivan S.A."/>
            <person name="Crabtree J."/>
            <person name="Creasy T."/>
            <person name="Davidsen T.M."/>
            <person name="Haft D.H."/>
            <person name="Zafar N."/>
            <person name="Zhou L."/>
            <person name="Halpin R."/>
            <person name="Holley T."/>
            <person name="Khouri H.M."/>
            <person name="Feldblyum T.V."/>
            <person name="White O."/>
            <person name="Fraser C.M."/>
            <person name="Chatterjee A.K."/>
            <person name="Cartinhour S."/>
            <person name="Schneider D."/>
            <person name="Mansfield J.W."/>
            <person name="Collmer A."/>
            <person name="Buell R."/>
        </authorList>
    </citation>
    <scope>NUCLEOTIDE SEQUENCE [LARGE SCALE GENOMIC DNA]</scope>
    <source>
        <strain>1448A / Race 6</strain>
    </source>
</reference>
<protein>
    <recommendedName>
        <fullName evidence="1">Flagellar P-ring protein</fullName>
    </recommendedName>
    <alternativeName>
        <fullName evidence="1">Basal body P-ring protein</fullName>
    </alternativeName>
</protein>
<name>FLGI_PSE14</name>
<comment type="function">
    <text evidence="1">Assembles around the rod to form the L-ring and probably protects the motor/basal body from shearing forces during rotation.</text>
</comment>
<comment type="subunit">
    <text evidence="1">The basal body constitutes a major portion of the flagellar organelle and consists of four rings (L,P,S, and M) mounted on a central rod.</text>
</comment>
<comment type="subcellular location">
    <subcellularLocation>
        <location evidence="1">Periplasm</location>
    </subcellularLocation>
    <subcellularLocation>
        <location evidence="1">Bacterial flagellum basal body</location>
    </subcellularLocation>
</comment>
<comment type="similarity">
    <text evidence="1">Belongs to the FlgI family.</text>
</comment>
<keyword id="KW-0975">Bacterial flagellum</keyword>
<keyword id="KW-0574">Periplasm</keyword>
<keyword id="KW-0732">Signal</keyword>